<comment type="function">
    <text evidence="2">Involved in the incorporation of ferulate into the cell wall.</text>
</comment>
<comment type="miscellaneous">
    <text evidence="2">Plants over-expressing AT15 have significant reduction of ferulate in leaf cell wall.</text>
</comment>
<comment type="similarity">
    <text evidence="4">Belongs to the plant acyltransferase family.</text>
</comment>
<proteinExistence type="evidence at transcript level"/>
<sequence>MSIVVSKSAPVVVRPSEPATSTADKILLSTLDKPVATIPVTVLLAFDHPIHDATAETIKTALAQSLVHYYPIAGRISCDNDDGGHFYIDCTGEDLGVTFVAASANCTMEELMCLVDDQAPDDETAVVQQLAFNCTPDDLHHRLLWVQVTTLNCGGFVVGVTWSHGVADGPGIAQFIQAVGELARGLPSPSVVPVRLDDKIATQAVPPFTMAVHRFISGLKPVSNLDVRNVTVSSSLINHIIVGARRRATVFEAVAAVLWQCRTRVVMTDPEAPAVLLFAVNARKYLGAKDGYYGCCTAMHMAVSKSGTVANGDIMKLVGIIRRAKEQIPEQLKADDGEMMLRTMVGEKQVNGYESLLYLTSWRNIGFEDVDFGSGKTARVMTYPPRMLSMMPRIAPICFMLKATEEGVRVMSDCVTADHADAFYQEIAKLKATT</sequence>
<gene>
    <name evidence="3" type="primary">AT15</name>
    <name evidence="7" type="ordered locus">Os10g0108700</name>
    <name evidence="6" type="ordered locus">LOC_Os10g01920</name>
    <name evidence="8" type="ORF">OsJ_30490</name>
    <name evidence="5" type="ORF">OSJNBa0015O22.8</name>
</gene>
<name>AT15_ORYSJ</name>
<accession>Q7XHC4</accession>
<accession>Q8S7Z5</accession>
<organism>
    <name type="scientific">Oryza sativa subsp. japonica</name>
    <name type="common">Rice</name>
    <dbReference type="NCBI Taxonomy" id="39947"/>
    <lineage>
        <taxon>Eukaryota</taxon>
        <taxon>Viridiplantae</taxon>
        <taxon>Streptophyta</taxon>
        <taxon>Embryophyta</taxon>
        <taxon>Tracheophyta</taxon>
        <taxon>Spermatophyta</taxon>
        <taxon>Magnoliopsida</taxon>
        <taxon>Liliopsida</taxon>
        <taxon>Poales</taxon>
        <taxon>Poaceae</taxon>
        <taxon>BOP clade</taxon>
        <taxon>Oryzoideae</taxon>
        <taxon>Oryzeae</taxon>
        <taxon>Oryzinae</taxon>
        <taxon>Oryza</taxon>
        <taxon>Oryza sativa</taxon>
    </lineage>
</organism>
<keyword id="KW-0012">Acyltransferase</keyword>
<keyword id="KW-1185">Reference proteome</keyword>
<keyword id="KW-0808">Transferase</keyword>
<feature type="chain" id="PRO_0000437781" description="Acyl transferase 15">
    <location>
        <begin position="1"/>
        <end position="434"/>
    </location>
</feature>
<feature type="active site" description="Proton acceptor" evidence="1">
    <location>
        <position position="164"/>
    </location>
</feature>
<feature type="active site" description="Proton acceptor" evidence="1">
    <location>
        <position position="371"/>
    </location>
</feature>
<dbReference type="EC" id="2.3.1.-" evidence="4"/>
<dbReference type="EMBL" id="AC068654">
    <property type="protein sequence ID" value="AAM08506.1"/>
    <property type="molecule type" value="Genomic_DNA"/>
</dbReference>
<dbReference type="EMBL" id="DP000086">
    <property type="protein sequence ID" value="AAP51811.1"/>
    <property type="molecule type" value="Genomic_DNA"/>
</dbReference>
<dbReference type="EMBL" id="AP008216">
    <property type="protein sequence ID" value="BAF25942.1"/>
    <property type="molecule type" value="Genomic_DNA"/>
</dbReference>
<dbReference type="EMBL" id="AP014966">
    <property type="protein sequence ID" value="BAT09613.1"/>
    <property type="molecule type" value="Genomic_DNA"/>
</dbReference>
<dbReference type="EMBL" id="CM000147">
    <property type="protein sequence ID" value="EAZ15078.1"/>
    <property type="molecule type" value="Genomic_DNA"/>
</dbReference>
<dbReference type="EMBL" id="AK060060">
    <property type="protein sequence ID" value="BAG87295.1"/>
    <property type="molecule type" value="mRNA"/>
</dbReference>
<dbReference type="EMBL" id="AK060361">
    <property type="protein sequence ID" value="BAG87421.1"/>
    <property type="molecule type" value="mRNA"/>
</dbReference>
<dbReference type="RefSeq" id="XP_015613915.1">
    <property type="nucleotide sequence ID" value="XM_015758429.1"/>
</dbReference>
<dbReference type="SMR" id="Q7XHC4"/>
<dbReference type="FunCoup" id="Q7XHC4">
    <property type="interactions" value="2"/>
</dbReference>
<dbReference type="STRING" id="39947.Q7XHC4"/>
<dbReference type="PaxDb" id="39947-Q7XHC4"/>
<dbReference type="EnsemblPlants" id="Os10t0108700-01">
    <property type="protein sequence ID" value="Os10t0108700-01"/>
    <property type="gene ID" value="Os10g0108700"/>
</dbReference>
<dbReference type="EnsemblPlants" id="Os10t0108700-02">
    <property type="protein sequence ID" value="Os10t0108700-02"/>
    <property type="gene ID" value="Os10g0108700"/>
</dbReference>
<dbReference type="Gramene" id="Os10t0108700-01">
    <property type="protein sequence ID" value="Os10t0108700-01"/>
    <property type="gene ID" value="Os10g0108700"/>
</dbReference>
<dbReference type="Gramene" id="Os10t0108700-02">
    <property type="protein sequence ID" value="Os10t0108700-02"/>
    <property type="gene ID" value="Os10g0108700"/>
</dbReference>
<dbReference type="KEGG" id="dosa:Os10g0108700"/>
<dbReference type="eggNOG" id="ENOG502RMG6">
    <property type="taxonomic scope" value="Eukaryota"/>
</dbReference>
<dbReference type="HOGENOM" id="CLU_014546_4_0_1"/>
<dbReference type="InParanoid" id="Q7XHC4"/>
<dbReference type="OMA" id="YYHIAGR"/>
<dbReference type="OrthoDB" id="1932220at2759"/>
<dbReference type="Proteomes" id="UP000000763">
    <property type="component" value="Chromosome 10"/>
</dbReference>
<dbReference type="Proteomes" id="UP000007752">
    <property type="component" value="Chromosome 10"/>
</dbReference>
<dbReference type="Proteomes" id="UP000059680">
    <property type="component" value="Chromosome 10"/>
</dbReference>
<dbReference type="GO" id="GO:0050734">
    <property type="term" value="F:hydroxycinnamoyltransferase activity"/>
    <property type="evidence" value="ECO:0007669"/>
    <property type="project" value="UniProtKB-ARBA"/>
</dbReference>
<dbReference type="Gene3D" id="3.30.559.10">
    <property type="entry name" value="Chloramphenicol acetyltransferase-like domain"/>
    <property type="match status" value="2"/>
</dbReference>
<dbReference type="InterPro" id="IPR023213">
    <property type="entry name" value="CAT-like_dom_sf"/>
</dbReference>
<dbReference type="InterPro" id="IPR050898">
    <property type="entry name" value="Plant_acyltransferase"/>
</dbReference>
<dbReference type="PANTHER" id="PTHR31147:SF61">
    <property type="entry name" value="ACYL TRANSFERASE 15"/>
    <property type="match status" value="1"/>
</dbReference>
<dbReference type="PANTHER" id="PTHR31147">
    <property type="entry name" value="ACYL TRANSFERASE 4"/>
    <property type="match status" value="1"/>
</dbReference>
<dbReference type="Pfam" id="PF02458">
    <property type="entry name" value="Transferase"/>
    <property type="match status" value="1"/>
</dbReference>
<reference key="1">
    <citation type="journal article" date="2003" name="Science">
        <title>In-depth view of structure, activity, and evolution of rice chromosome 10.</title>
        <authorList>
            <person name="Yu Y."/>
            <person name="Rambo T."/>
            <person name="Currie J."/>
            <person name="Saski C."/>
            <person name="Kim H.-R."/>
            <person name="Collura K."/>
            <person name="Thompson S."/>
            <person name="Simmons J."/>
            <person name="Yang T.-J."/>
            <person name="Nah G."/>
            <person name="Patel A.J."/>
            <person name="Thurmond S."/>
            <person name="Henry D."/>
            <person name="Oates R."/>
            <person name="Palmer M."/>
            <person name="Pries G."/>
            <person name="Gibson J."/>
            <person name="Anderson H."/>
            <person name="Paradkar M."/>
            <person name="Crane L."/>
            <person name="Dale J."/>
            <person name="Carver M.B."/>
            <person name="Wood T."/>
            <person name="Frisch D."/>
            <person name="Engler F."/>
            <person name="Soderlund C."/>
            <person name="Palmer L.E."/>
            <person name="Teytelman L."/>
            <person name="Nascimento L."/>
            <person name="De la Bastide M."/>
            <person name="Spiegel L."/>
            <person name="Ware D."/>
            <person name="O'Shaughnessy A."/>
            <person name="Dike S."/>
            <person name="Dedhia N."/>
            <person name="Preston R."/>
            <person name="Huang E."/>
            <person name="Ferraro K."/>
            <person name="Kuit K."/>
            <person name="Miller B."/>
            <person name="Zutavern T."/>
            <person name="Katzenberger F."/>
            <person name="Muller S."/>
            <person name="Balija V."/>
            <person name="Martienssen R.A."/>
            <person name="Stein L."/>
            <person name="Minx P."/>
            <person name="Johnson D."/>
            <person name="Cordum H."/>
            <person name="Mardis E."/>
            <person name="Cheng Z."/>
            <person name="Jiang J."/>
            <person name="Wilson R."/>
            <person name="McCombie W.R."/>
            <person name="Wing R.A."/>
            <person name="Yuan Q."/>
            <person name="Ouyang S."/>
            <person name="Liu J."/>
            <person name="Jones K.M."/>
            <person name="Gansberger K."/>
            <person name="Moffat K."/>
            <person name="Hill J."/>
            <person name="Tsitrin T."/>
            <person name="Overton L."/>
            <person name="Bera J."/>
            <person name="Kim M."/>
            <person name="Jin S."/>
            <person name="Tallon L."/>
            <person name="Ciecko A."/>
            <person name="Pai G."/>
            <person name="Van Aken S."/>
            <person name="Utterback T."/>
            <person name="Reidmuller S."/>
            <person name="Bormann J."/>
            <person name="Feldblyum T."/>
            <person name="Hsiao J."/>
            <person name="Zismann V."/>
            <person name="Blunt S."/>
            <person name="de Vazeille A.R."/>
            <person name="Shaffer T."/>
            <person name="Koo H."/>
            <person name="Suh B."/>
            <person name="Yang Q."/>
            <person name="Haas B."/>
            <person name="Peterson J."/>
            <person name="Pertea M."/>
            <person name="Volfovsky N."/>
            <person name="Wortman J."/>
            <person name="White O."/>
            <person name="Salzberg S.L."/>
            <person name="Fraser C.M."/>
            <person name="Buell C.R."/>
            <person name="Messing J."/>
            <person name="Song R."/>
            <person name="Fuks G."/>
            <person name="Llaca V."/>
            <person name="Kovchak S."/>
            <person name="Young S."/>
            <person name="Bowers J.E."/>
            <person name="Paterson A.H."/>
            <person name="Johns M.A."/>
            <person name="Mao L."/>
            <person name="Pan H."/>
            <person name="Dean R.A."/>
        </authorList>
    </citation>
    <scope>NUCLEOTIDE SEQUENCE [LARGE SCALE GENOMIC DNA]</scope>
    <source>
        <strain>cv. Nipponbare</strain>
    </source>
</reference>
<reference key="2">
    <citation type="journal article" date="2005" name="Nature">
        <title>The map-based sequence of the rice genome.</title>
        <authorList>
            <consortium name="International rice genome sequencing project (IRGSP)"/>
        </authorList>
    </citation>
    <scope>NUCLEOTIDE SEQUENCE [LARGE SCALE GENOMIC DNA]</scope>
    <source>
        <strain>cv. Nipponbare</strain>
    </source>
</reference>
<reference key="3">
    <citation type="journal article" date="2008" name="Nucleic Acids Res.">
        <title>The rice annotation project database (RAP-DB): 2008 update.</title>
        <authorList>
            <consortium name="The rice annotation project (RAP)"/>
        </authorList>
    </citation>
    <scope>GENOME REANNOTATION</scope>
    <source>
        <strain>cv. Nipponbare</strain>
    </source>
</reference>
<reference key="4">
    <citation type="journal article" date="2013" name="Rice">
        <title>Improvement of the Oryza sativa Nipponbare reference genome using next generation sequence and optical map data.</title>
        <authorList>
            <person name="Kawahara Y."/>
            <person name="de la Bastide M."/>
            <person name="Hamilton J.P."/>
            <person name="Kanamori H."/>
            <person name="McCombie W.R."/>
            <person name="Ouyang S."/>
            <person name="Schwartz D.C."/>
            <person name="Tanaka T."/>
            <person name="Wu J."/>
            <person name="Zhou S."/>
            <person name="Childs K.L."/>
            <person name="Davidson R.M."/>
            <person name="Lin H."/>
            <person name="Quesada-Ocampo L."/>
            <person name="Vaillancourt B."/>
            <person name="Sakai H."/>
            <person name="Lee S.S."/>
            <person name="Kim J."/>
            <person name="Numa H."/>
            <person name="Itoh T."/>
            <person name="Buell C.R."/>
            <person name="Matsumoto T."/>
        </authorList>
    </citation>
    <scope>GENOME REANNOTATION</scope>
    <source>
        <strain>cv. Nipponbare</strain>
    </source>
</reference>
<reference key="5">
    <citation type="journal article" date="2005" name="PLoS Biol.">
        <title>The genomes of Oryza sativa: a history of duplications.</title>
        <authorList>
            <person name="Yu J."/>
            <person name="Wang J."/>
            <person name="Lin W."/>
            <person name="Li S."/>
            <person name="Li H."/>
            <person name="Zhou J."/>
            <person name="Ni P."/>
            <person name="Dong W."/>
            <person name="Hu S."/>
            <person name="Zeng C."/>
            <person name="Zhang J."/>
            <person name="Zhang Y."/>
            <person name="Li R."/>
            <person name="Xu Z."/>
            <person name="Li S."/>
            <person name="Li X."/>
            <person name="Zheng H."/>
            <person name="Cong L."/>
            <person name="Lin L."/>
            <person name="Yin J."/>
            <person name="Geng J."/>
            <person name="Li G."/>
            <person name="Shi J."/>
            <person name="Liu J."/>
            <person name="Lv H."/>
            <person name="Li J."/>
            <person name="Wang J."/>
            <person name="Deng Y."/>
            <person name="Ran L."/>
            <person name="Shi X."/>
            <person name="Wang X."/>
            <person name="Wu Q."/>
            <person name="Li C."/>
            <person name="Ren X."/>
            <person name="Wang J."/>
            <person name="Wang X."/>
            <person name="Li D."/>
            <person name="Liu D."/>
            <person name="Zhang X."/>
            <person name="Ji Z."/>
            <person name="Zhao W."/>
            <person name="Sun Y."/>
            <person name="Zhang Z."/>
            <person name="Bao J."/>
            <person name="Han Y."/>
            <person name="Dong L."/>
            <person name="Ji J."/>
            <person name="Chen P."/>
            <person name="Wu S."/>
            <person name="Liu J."/>
            <person name="Xiao Y."/>
            <person name="Bu D."/>
            <person name="Tan J."/>
            <person name="Yang L."/>
            <person name="Ye C."/>
            <person name="Zhang J."/>
            <person name="Xu J."/>
            <person name="Zhou Y."/>
            <person name="Yu Y."/>
            <person name="Zhang B."/>
            <person name="Zhuang S."/>
            <person name="Wei H."/>
            <person name="Liu B."/>
            <person name="Lei M."/>
            <person name="Yu H."/>
            <person name="Li Y."/>
            <person name="Xu H."/>
            <person name="Wei S."/>
            <person name="He X."/>
            <person name="Fang L."/>
            <person name="Zhang Z."/>
            <person name="Zhang Y."/>
            <person name="Huang X."/>
            <person name="Su Z."/>
            <person name="Tong W."/>
            <person name="Li J."/>
            <person name="Tong Z."/>
            <person name="Li S."/>
            <person name="Ye J."/>
            <person name="Wang L."/>
            <person name="Fang L."/>
            <person name="Lei T."/>
            <person name="Chen C.-S."/>
            <person name="Chen H.-C."/>
            <person name="Xu Z."/>
            <person name="Li H."/>
            <person name="Huang H."/>
            <person name="Zhang F."/>
            <person name="Xu H."/>
            <person name="Li N."/>
            <person name="Zhao C."/>
            <person name="Li S."/>
            <person name="Dong L."/>
            <person name="Huang Y."/>
            <person name="Li L."/>
            <person name="Xi Y."/>
            <person name="Qi Q."/>
            <person name="Li W."/>
            <person name="Zhang B."/>
            <person name="Hu W."/>
            <person name="Zhang Y."/>
            <person name="Tian X."/>
            <person name="Jiao Y."/>
            <person name="Liang X."/>
            <person name="Jin J."/>
            <person name="Gao L."/>
            <person name="Zheng W."/>
            <person name="Hao B."/>
            <person name="Liu S.-M."/>
            <person name="Wang W."/>
            <person name="Yuan L."/>
            <person name="Cao M."/>
            <person name="McDermott J."/>
            <person name="Samudrala R."/>
            <person name="Wang J."/>
            <person name="Wong G.K.-S."/>
            <person name="Yang H."/>
        </authorList>
    </citation>
    <scope>NUCLEOTIDE SEQUENCE [LARGE SCALE GENOMIC DNA]</scope>
    <source>
        <strain>cv. Nipponbare</strain>
    </source>
</reference>
<reference key="6">
    <citation type="journal article" date="2003" name="Science">
        <title>Collection, mapping, and annotation of over 28,000 cDNA clones from japonica rice.</title>
        <authorList>
            <consortium name="The rice full-length cDNA consortium"/>
        </authorList>
    </citation>
    <scope>NUCLEOTIDE SEQUENCE [LARGE SCALE MRNA]</scope>
    <source>
        <strain>cv. Nipponbare</strain>
    </source>
</reference>
<reference key="7">
    <citation type="journal article" date="2013" name="Plant Physiol.">
        <title>Overexpression of a BAHD acyltransferase, OsAt10, alters rice cell wall hydroxycinnamic acid content and saccharification.</title>
        <authorList>
            <person name="Bartley L.E."/>
            <person name="Peck M.L."/>
            <person name="Kim S.R."/>
            <person name="Ebert B."/>
            <person name="Manisseri C."/>
            <person name="Chiniquy D.M."/>
            <person name="Sykes R."/>
            <person name="Gao L."/>
            <person name="Rautengarten C."/>
            <person name="Vega-Sanchez M.E."/>
            <person name="Benke P.I."/>
            <person name="Canlas P.E."/>
            <person name="Cao P."/>
            <person name="Brewer S."/>
            <person name="Lin F."/>
            <person name="Smith W.L."/>
            <person name="Zhang X."/>
            <person name="Keasling J.D."/>
            <person name="Jentoff R.E."/>
            <person name="Foster S.B."/>
            <person name="Zhou J."/>
            <person name="Ziebell A."/>
            <person name="An G."/>
            <person name="Scheller H.V."/>
            <person name="Ronald P.C."/>
        </authorList>
    </citation>
    <scope>FUNCTION</scope>
</reference>
<evidence type="ECO:0000250" key="1">
    <source>
        <dbReference type="UniProtKB" id="Q8W1W9"/>
    </source>
</evidence>
<evidence type="ECO:0000269" key="2">
    <source>
    </source>
</evidence>
<evidence type="ECO:0000303" key="3">
    <source>
    </source>
</evidence>
<evidence type="ECO:0000305" key="4"/>
<evidence type="ECO:0000312" key="5">
    <source>
        <dbReference type="EMBL" id="AAM08506.1"/>
    </source>
</evidence>
<evidence type="ECO:0000312" key="6">
    <source>
        <dbReference type="EMBL" id="AAP51811.1"/>
    </source>
</evidence>
<evidence type="ECO:0000312" key="7">
    <source>
        <dbReference type="EMBL" id="BAT09613.1"/>
    </source>
</evidence>
<evidence type="ECO:0000312" key="8">
    <source>
        <dbReference type="EMBL" id="EAZ15078.1"/>
    </source>
</evidence>
<protein>
    <recommendedName>
        <fullName evidence="4">Acyl transferase 15</fullName>
        <shortName evidence="3">OsAT15</shortName>
        <ecNumber evidence="4">2.3.1.-</ecNumber>
    </recommendedName>
</protein>